<evidence type="ECO:0000255" key="1">
    <source>
        <dbReference type="HAMAP-Rule" id="MF_00102"/>
    </source>
</evidence>
<evidence type="ECO:0000305" key="2"/>
<protein>
    <recommendedName>
        <fullName evidence="1">4-hydroxy-tetrahydrodipicolinate reductase</fullName>
        <shortName evidence="1">HTPA reductase</shortName>
        <ecNumber evidence="1">1.17.1.8</ecNumber>
    </recommendedName>
</protein>
<comment type="function">
    <text evidence="1">Catalyzes the conversion of 4-hydroxy-tetrahydrodipicolinate (HTPA) to tetrahydrodipicolinate.</text>
</comment>
<comment type="catalytic activity">
    <reaction evidence="1">
        <text>(S)-2,3,4,5-tetrahydrodipicolinate + NAD(+) + H2O = (2S,4S)-4-hydroxy-2,3,4,5-tetrahydrodipicolinate + NADH + H(+)</text>
        <dbReference type="Rhea" id="RHEA:35323"/>
        <dbReference type="ChEBI" id="CHEBI:15377"/>
        <dbReference type="ChEBI" id="CHEBI:15378"/>
        <dbReference type="ChEBI" id="CHEBI:16845"/>
        <dbReference type="ChEBI" id="CHEBI:57540"/>
        <dbReference type="ChEBI" id="CHEBI:57945"/>
        <dbReference type="ChEBI" id="CHEBI:67139"/>
        <dbReference type="EC" id="1.17.1.8"/>
    </reaction>
</comment>
<comment type="catalytic activity">
    <reaction evidence="1">
        <text>(S)-2,3,4,5-tetrahydrodipicolinate + NADP(+) + H2O = (2S,4S)-4-hydroxy-2,3,4,5-tetrahydrodipicolinate + NADPH + H(+)</text>
        <dbReference type="Rhea" id="RHEA:35331"/>
        <dbReference type="ChEBI" id="CHEBI:15377"/>
        <dbReference type="ChEBI" id="CHEBI:15378"/>
        <dbReference type="ChEBI" id="CHEBI:16845"/>
        <dbReference type="ChEBI" id="CHEBI:57783"/>
        <dbReference type="ChEBI" id="CHEBI:58349"/>
        <dbReference type="ChEBI" id="CHEBI:67139"/>
        <dbReference type="EC" id="1.17.1.8"/>
    </reaction>
</comment>
<comment type="pathway">
    <text evidence="1">Amino-acid biosynthesis; L-lysine biosynthesis via DAP pathway; (S)-tetrahydrodipicolinate from L-aspartate: step 4/4.</text>
</comment>
<comment type="subunit">
    <text evidence="1">Homotetramer.</text>
</comment>
<comment type="subcellular location">
    <subcellularLocation>
        <location evidence="1">Cytoplasm</location>
    </subcellularLocation>
</comment>
<comment type="similarity">
    <text evidence="1">Belongs to the DapB family.</text>
</comment>
<comment type="caution">
    <text evidence="2">Was originally thought to be a dihydrodipicolinate reductase (DHDPR), catalyzing the conversion of dihydrodipicolinate to tetrahydrodipicolinate. However, it was shown in E.coli that the substrate of the enzymatic reaction is not dihydrodipicolinate (DHDP) but in fact (2S,4S)-4-hydroxy-2,3,4,5-tetrahydrodipicolinic acid (HTPA), the product released by the DapA-catalyzed reaction.</text>
</comment>
<accession>A7ZHC0</accession>
<feature type="chain" id="PRO_1000057683" description="4-hydroxy-tetrahydrodipicolinate reductase">
    <location>
        <begin position="1"/>
        <end position="273"/>
    </location>
</feature>
<feature type="active site" description="Proton donor/acceptor" evidence="1">
    <location>
        <position position="159"/>
    </location>
</feature>
<feature type="active site" description="Proton donor" evidence="1">
    <location>
        <position position="163"/>
    </location>
</feature>
<feature type="binding site" evidence="1">
    <location>
        <begin position="12"/>
        <end position="17"/>
    </location>
    <ligand>
        <name>NAD(+)</name>
        <dbReference type="ChEBI" id="CHEBI:57540"/>
    </ligand>
</feature>
<feature type="binding site" evidence="1">
    <location>
        <position position="38"/>
    </location>
    <ligand>
        <name>NAD(+)</name>
        <dbReference type="ChEBI" id="CHEBI:57540"/>
    </ligand>
</feature>
<feature type="binding site" evidence="1">
    <location>
        <position position="39"/>
    </location>
    <ligand>
        <name>NADP(+)</name>
        <dbReference type="ChEBI" id="CHEBI:58349"/>
    </ligand>
</feature>
<feature type="binding site" evidence="1">
    <location>
        <begin position="102"/>
        <end position="104"/>
    </location>
    <ligand>
        <name>NAD(+)</name>
        <dbReference type="ChEBI" id="CHEBI:57540"/>
    </ligand>
</feature>
<feature type="binding site" evidence="1">
    <location>
        <begin position="126"/>
        <end position="129"/>
    </location>
    <ligand>
        <name>NAD(+)</name>
        <dbReference type="ChEBI" id="CHEBI:57540"/>
    </ligand>
</feature>
<feature type="binding site" evidence="1">
    <location>
        <position position="160"/>
    </location>
    <ligand>
        <name>(S)-2,3,4,5-tetrahydrodipicolinate</name>
        <dbReference type="ChEBI" id="CHEBI:16845"/>
    </ligand>
</feature>
<feature type="binding site" evidence="1">
    <location>
        <begin position="169"/>
        <end position="170"/>
    </location>
    <ligand>
        <name>(S)-2,3,4,5-tetrahydrodipicolinate</name>
        <dbReference type="ChEBI" id="CHEBI:16845"/>
    </ligand>
</feature>
<gene>
    <name evidence="1" type="primary">dapB</name>
    <name type="ordered locus">EcE24377A_0031</name>
</gene>
<keyword id="KW-0028">Amino-acid biosynthesis</keyword>
<keyword id="KW-0963">Cytoplasm</keyword>
<keyword id="KW-0220">Diaminopimelate biosynthesis</keyword>
<keyword id="KW-0457">Lysine biosynthesis</keyword>
<keyword id="KW-0520">NAD</keyword>
<keyword id="KW-0521">NADP</keyword>
<keyword id="KW-0560">Oxidoreductase</keyword>
<keyword id="KW-1185">Reference proteome</keyword>
<sequence>MHDANIRVAIAGAGGRMGRQLIQAALALEGVQLGAALEREGSSLLGSDAGELAGAGKTGVTVQSSLDAVKDDFDVFIDFTRPEGTLNHLAFCRQHGKGMVIGTTGFDEAGKQAIRDAAADIAIVFAANFSVGVNVMLKLLEKAAKVMGDYTDIEIIEAHHRHKVDAPSGTALAMGEAIAHALDKDLKDCAVYSREGHTGERVPGTIGFATVRAGDIVGEHTAMFADIGERLEITHKASSRMTFANGAVRSALWLSGKESGLFDMRDVLDLNSL</sequence>
<reference key="1">
    <citation type="journal article" date="2008" name="J. Bacteriol.">
        <title>The pangenome structure of Escherichia coli: comparative genomic analysis of E. coli commensal and pathogenic isolates.</title>
        <authorList>
            <person name="Rasko D.A."/>
            <person name="Rosovitz M.J."/>
            <person name="Myers G.S.A."/>
            <person name="Mongodin E.F."/>
            <person name="Fricke W.F."/>
            <person name="Gajer P."/>
            <person name="Crabtree J."/>
            <person name="Sebaihia M."/>
            <person name="Thomson N.R."/>
            <person name="Chaudhuri R."/>
            <person name="Henderson I.R."/>
            <person name="Sperandio V."/>
            <person name="Ravel J."/>
        </authorList>
    </citation>
    <scope>NUCLEOTIDE SEQUENCE [LARGE SCALE GENOMIC DNA]</scope>
    <source>
        <strain>E24377A / ETEC</strain>
    </source>
</reference>
<dbReference type="EC" id="1.17.1.8" evidence="1"/>
<dbReference type="EMBL" id="CP000800">
    <property type="protein sequence ID" value="ABV18714.1"/>
    <property type="molecule type" value="Genomic_DNA"/>
</dbReference>
<dbReference type="RefSeq" id="WP_000543605.1">
    <property type="nucleotide sequence ID" value="NC_009801.1"/>
</dbReference>
<dbReference type="SMR" id="A7ZHC0"/>
<dbReference type="KEGG" id="ecw:EcE24377A_0031"/>
<dbReference type="HOGENOM" id="CLU_047479_2_1_6"/>
<dbReference type="UniPathway" id="UPA00034">
    <property type="reaction ID" value="UER00018"/>
</dbReference>
<dbReference type="Proteomes" id="UP000001122">
    <property type="component" value="Chromosome"/>
</dbReference>
<dbReference type="GO" id="GO:0005829">
    <property type="term" value="C:cytosol"/>
    <property type="evidence" value="ECO:0007669"/>
    <property type="project" value="TreeGrafter"/>
</dbReference>
<dbReference type="GO" id="GO:0008839">
    <property type="term" value="F:4-hydroxy-tetrahydrodipicolinate reductase"/>
    <property type="evidence" value="ECO:0007669"/>
    <property type="project" value="UniProtKB-EC"/>
</dbReference>
<dbReference type="GO" id="GO:0051287">
    <property type="term" value="F:NAD binding"/>
    <property type="evidence" value="ECO:0007669"/>
    <property type="project" value="UniProtKB-UniRule"/>
</dbReference>
<dbReference type="GO" id="GO:0050661">
    <property type="term" value="F:NADP binding"/>
    <property type="evidence" value="ECO:0007669"/>
    <property type="project" value="UniProtKB-UniRule"/>
</dbReference>
<dbReference type="GO" id="GO:0016726">
    <property type="term" value="F:oxidoreductase activity, acting on CH or CH2 groups, NAD or NADP as acceptor"/>
    <property type="evidence" value="ECO:0007669"/>
    <property type="project" value="UniProtKB-UniRule"/>
</dbReference>
<dbReference type="GO" id="GO:0019877">
    <property type="term" value="P:diaminopimelate biosynthetic process"/>
    <property type="evidence" value="ECO:0007669"/>
    <property type="project" value="UniProtKB-UniRule"/>
</dbReference>
<dbReference type="GO" id="GO:0009089">
    <property type="term" value="P:lysine biosynthetic process via diaminopimelate"/>
    <property type="evidence" value="ECO:0007669"/>
    <property type="project" value="UniProtKB-UniRule"/>
</dbReference>
<dbReference type="CDD" id="cd02274">
    <property type="entry name" value="DHDPR_N"/>
    <property type="match status" value="1"/>
</dbReference>
<dbReference type="FunFam" id="3.30.360.10:FF:000004">
    <property type="entry name" value="4-hydroxy-tetrahydrodipicolinate reductase"/>
    <property type="match status" value="1"/>
</dbReference>
<dbReference type="FunFam" id="3.40.50.720:FF:000048">
    <property type="entry name" value="4-hydroxy-tetrahydrodipicolinate reductase"/>
    <property type="match status" value="1"/>
</dbReference>
<dbReference type="Gene3D" id="3.30.360.10">
    <property type="entry name" value="Dihydrodipicolinate Reductase, domain 2"/>
    <property type="match status" value="1"/>
</dbReference>
<dbReference type="Gene3D" id="3.40.50.720">
    <property type="entry name" value="NAD(P)-binding Rossmann-like Domain"/>
    <property type="match status" value="1"/>
</dbReference>
<dbReference type="HAMAP" id="MF_00102">
    <property type="entry name" value="DapB"/>
    <property type="match status" value="1"/>
</dbReference>
<dbReference type="InterPro" id="IPR022663">
    <property type="entry name" value="DapB_C"/>
</dbReference>
<dbReference type="InterPro" id="IPR000846">
    <property type="entry name" value="DapB_N"/>
</dbReference>
<dbReference type="InterPro" id="IPR022664">
    <property type="entry name" value="DapB_N_CS"/>
</dbReference>
<dbReference type="InterPro" id="IPR023940">
    <property type="entry name" value="DHDPR_bac"/>
</dbReference>
<dbReference type="InterPro" id="IPR036291">
    <property type="entry name" value="NAD(P)-bd_dom_sf"/>
</dbReference>
<dbReference type="NCBIfam" id="TIGR00036">
    <property type="entry name" value="dapB"/>
    <property type="match status" value="1"/>
</dbReference>
<dbReference type="PANTHER" id="PTHR20836:SF0">
    <property type="entry name" value="4-HYDROXY-TETRAHYDRODIPICOLINATE REDUCTASE 1, CHLOROPLASTIC-RELATED"/>
    <property type="match status" value="1"/>
</dbReference>
<dbReference type="PANTHER" id="PTHR20836">
    <property type="entry name" value="DIHYDRODIPICOLINATE REDUCTASE"/>
    <property type="match status" value="1"/>
</dbReference>
<dbReference type="Pfam" id="PF05173">
    <property type="entry name" value="DapB_C"/>
    <property type="match status" value="1"/>
</dbReference>
<dbReference type="Pfam" id="PF01113">
    <property type="entry name" value="DapB_N"/>
    <property type="match status" value="1"/>
</dbReference>
<dbReference type="PIRSF" id="PIRSF000161">
    <property type="entry name" value="DHPR"/>
    <property type="match status" value="1"/>
</dbReference>
<dbReference type="SUPFAM" id="SSF55347">
    <property type="entry name" value="Glyceraldehyde-3-phosphate dehydrogenase-like, C-terminal domain"/>
    <property type="match status" value="1"/>
</dbReference>
<dbReference type="SUPFAM" id="SSF51735">
    <property type="entry name" value="NAD(P)-binding Rossmann-fold domains"/>
    <property type="match status" value="1"/>
</dbReference>
<dbReference type="PROSITE" id="PS01298">
    <property type="entry name" value="DAPB"/>
    <property type="match status" value="1"/>
</dbReference>
<organism>
    <name type="scientific">Escherichia coli O139:H28 (strain E24377A / ETEC)</name>
    <dbReference type="NCBI Taxonomy" id="331111"/>
    <lineage>
        <taxon>Bacteria</taxon>
        <taxon>Pseudomonadati</taxon>
        <taxon>Pseudomonadota</taxon>
        <taxon>Gammaproteobacteria</taxon>
        <taxon>Enterobacterales</taxon>
        <taxon>Enterobacteriaceae</taxon>
        <taxon>Escherichia</taxon>
    </lineage>
</organism>
<proteinExistence type="inferred from homology"/>
<name>DAPB_ECO24</name>